<organism>
    <name type="scientific">Treponema pallidum (strain Nichols)</name>
    <dbReference type="NCBI Taxonomy" id="243276"/>
    <lineage>
        <taxon>Bacteria</taxon>
        <taxon>Pseudomonadati</taxon>
        <taxon>Spirochaetota</taxon>
        <taxon>Spirochaetia</taxon>
        <taxon>Spirochaetales</taxon>
        <taxon>Treponemataceae</taxon>
        <taxon>Treponema</taxon>
    </lineage>
</organism>
<sequence length="196" mass="20942">MHAQNVDIAPGSTSTVSIIVGIDPGLESTGYGVIEAGGGSLRCLTYGVIVTQSNQPSAARLRHIFDTLQQVISIYQPQYCAVETIYFAKNVTSALCVAQARGVVLLAMAQQHISVAEYAPNAIKKAITGIAQAEKRQVQHLVKILLNLKDIPHPDHAADALAVAVTHVHCCMSSNYAVGSTRSRGAYVTLYKKGKR</sequence>
<dbReference type="EC" id="3.1.21.10" evidence="1"/>
<dbReference type="EMBL" id="AE000520">
    <property type="protein sequence ID" value="AAC65505.1"/>
    <property type="molecule type" value="Genomic_DNA"/>
</dbReference>
<dbReference type="PIR" id="D71315">
    <property type="entry name" value="D71315"/>
</dbReference>
<dbReference type="RefSeq" id="WP_010881966.1">
    <property type="nucleotide sequence ID" value="NC_021490.2"/>
</dbReference>
<dbReference type="SMR" id="O83530"/>
<dbReference type="IntAct" id="O83530">
    <property type="interactions" value="21"/>
</dbReference>
<dbReference type="STRING" id="243276.TP_0517"/>
<dbReference type="EnsemblBacteria" id="AAC65505">
    <property type="protein sequence ID" value="AAC65505"/>
    <property type="gene ID" value="TP_0517"/>
</dbReference>
<dbReference type="GeneID" id="93876286"/>
<dbReference type="KEGG" id="tpa:TP_0517"/>
<dbReference type="KEGG" id="tpw:TPANIC_0517"/>
<dbReference type="eggNOG" id="COG0817">
    <property type="taxonomic scope" value="Bacteria"/>
</dbReference>
<dbReference type="HOGENOM" id="CLU_091257_3_1_12"/>
<dbReference type="OrthoDB" id="9805499at2"/>
<dbReference type="Proteomes" id="UP000000811">
    <property type="component" value="Chromosome"/>
</dbReference>
<dbReference type="GO" id="GO:0005737">
    <property type="term" value="C:cytoplasm"/>
    <property type="evidence" value="ECO:0007669"/>
    <property type="project" value="UniProtKB-SubCell"/>
</dbReference>
<dbReference type="GO" id="GO:0048476">
    <property type="term" value="C:Holliday junction resolvase complex"/>
    <property type="evidence" value="ECO:0007669"/>
    <property type="project" value="UniProtKB-UniRule"/>
</dbReference>
<dbReference type="GO" id="GO:0008821">
    <property type="term" value="F:crossover junction DNA endonuclease activity"/>
    <property type="evidence" value="ECO:0007669"/>
    <property type="project" value="UniProtKB-UniRule"/>
</dbReference>
<dbReference type="GO" id="GO:0003677">
    <property type="term" value="F:DNA binding"/>
    <property type="evidence" value="ECO:0007669"/>
    <property type="project" value="UniProtKB-KW"/>
</dbReference>
<dbReference type="GO" id="GO:0000287">
    <property type="term" value="F:magnesium ion binding"/>
    <property type="evidence" value="ECO:0007669"/>
    <property type="project" value="UniProtKB-UniRule"/>
</dbReference>
<dbReference type="GO" id="GO:0006310">
    <property type="term" value="P:DNA recombination"/>
    <property type="evidence" value="ECO:0007669"/>
    <property type="project" value="UniProtKB-UniRule"/>
</dbReference>
<dbReference type="GO" id="GO:0006281">
    <property type="term" value="P:DNA repair"/>
    <property type="evidence" value="ECO:0007669"/>
    <property type="project" value="UniProtKB-UniRule"/>
</dbReference>
<dbReference type="CDD" id="cd16962">
    <property type="entry name" value="RuvC"/>
    <property type="match status" value="1"/>
</dbReference>
<dbReference type="FunFam" id="3.30.420.10:FF:000002">
    <property type="entry name" value="Crossover junction endodeoxyribonuclease RuvC"/>
    <property type="match status" value="1"/>
</dbReference>
<dbReference type="Gene3D" id="3.30.420.10">
    <property type="entry name" value="Ribonuclease H-like superfamily/Ribonuclease H"/>
    <property type="match status" value="1"/>
</dbReference>
<dbReference type="HAMAP" id="MF_00034">
    <property type="entry name" value="RuvC"/>
    <property type="match status" value="1"/>
</dbReference>
<dbReference type="InterPro" id="IPR012337">
    <property type="entry name" value="RNaseH-like_sf"/>
</dbReference>
<dbReference type="InterPro" id="IPR036397">
    <property type="entry name" value="RNaseH_sf"/>
</dbReference>
<dbReference type="InterPro" id="IPR002176">
    <property type="entry name" value="X-over_junc_endoDNase_RuvC"/>
</dbReference>
<dbReference type="NCBIfam" id="NF000711">
    <property type="entry name" value="PRK00039.2-1"/>
    <property type="match status" value="1"/>
</dbReference>
<dbReference type="NCBIfam" id="TIGR00228">
    <property type="entry name" value="ruvC"/>
    <property type="match status" value="1"/>
</dbReference>
<dbReference type="PANTHER" id="PTHR30194">
    <property type="entry name" value="CROSSOVER JUNCTION ENDODEOXYRIBONUCLEASE RUVC"/>
    <property type="match status" value="1"/>
</dbReference>
<dbReference type="PANTHER" id="PTHR30194:SF3">
    <property type="entry name" value="CROSSOVER JUNCTION ENDODEOXYRIBONUCLEASE RUVC"/>
    <property type="match status" value="1"/>
</dbReference>
<dbReference type="Pfam" id="PF02075">
    <property type="entry name" value="RuvC"/>
    <property type="match status" value="1"/>
</dbReference>
<dbReference type="PRINTS" id="PR00696">
    <property type="entry name" value="RSOLVASERUVC"/>
</dbReference>
<dbReference type="SUPFAM" id="SSF53098">
    <property type="entry name" value="Ribonuclease H-like"/>
    <property type="match status" value="1"/>
</dbReference>
<proteinExistence type="inferred from homology"/>
<reference key="1">
    <citation type="journal article" date="1998" name="Science">
        <title>Complete genome sequence of Treponema pallidum, the syphilis spirochete.</title>
        <authorList>
            <person name="Fraser C.M."/>
            <person name="Norris S.J."/>
            <person name="Weinstock G.M."/>
            <person name="White O."/>
            <person name="Sutton G.G."/>
            <person name="Dodson R.J."/>
            <person name="Gwinn M.L."/>
            <person name="Hickey E.K."/>
            <person name="Clayton R.A."/>
            <person name="Ketchum K.A."/>
            <person name="Sodergren E."/>
            <person name="Hardham J.M."/>
            <person name="McLeod M.P."/>
            <person name="Salzberg S.L."/>
            <person name="Peterson J.D."/>
            <person name="Khalak H.G."/>
            <person name="Richardson D.L."/>
            <person name="Howell J.K."/>
            <person name="Chidambaram M."/>
            <person name="Utterback T.R."/>
            <person name="McDonald L.A."/>
            <person name="Artiach P."/>
            <person name="Bowman C."/>
            <person name="Cotton M.D."/>
            <person name="Fujii C."/>
            <person name="Garland S.A."/>
            <person name="Hatch B."/>
            <person name="Horst K."/>
            <person name="Roberts K.M."/>
            <person name="Sandusky M."/>
            <person name="Weidman J.F."/>
            <person name="Smith H.O."/>
            <person name="Venter J.C."/>
        </authorList>
    </citation>
    <scope>NUCLEOTIDE SEQUENCE [LARGE SCALE GENOMIC DNA]</scope>
    <source>
        <strain>Nichols</strain>
    </source>
</reference>
<protein>
    <recommendedName>
        <fullName evidence="1">Crossover junction endodeoxyribonuclease RuvC</fullName>
        <ecNumber evidence="1">3.1.21.10</ecNumber>
    </recommendedName>
    <alternativeName>
        <fullName evidence="1">Holliday junction nuclease RuvC</fullName>
    </alternativeName>
    <alternativeName>
        <fullName evidence="1">Holliday junction resolvase RuvC</fullName>
    </alternativeName>
</protein>
<comment type="function">
    <text evidence="1">The RuvA-RuvB-RuvC complex processes Holliday junction (HJ) DNA during genetic recombination and DNA repair. Endonuclease that resolves HJ intermediates. Cleaves cruciform DNA by making single-stranded nicks across the HJ at symmetrical positions within the homologous arms, yielding a 5'-phosphate and a 3'-hydroxyl group; requires a central core of homology in the junction. The consensus cleavage sequence is 5'-(A/T)TT(C/G)-3'. Cleavage occurs on the 3'-side of the TT dinucleotide at the point of strand exchange. HJ branch migration catalyzed by RuvA-RuvB allows RuvC to scan DNA until it finds its consensus sequence, where it cleaves and resolves the cruciform DNA.</text>
</comment>
<comment type="catalytic activity">
    <reaction evidence="1">
        <text>Endonucleolytic cleavage at a junction such as a reciprocal single-stranded crossover between two homologous DNA duplexes (Holliday junction).</text>
        <dbReference type="EC" id="3.1.21.10"/>
    </reaction>
</comment>
<comment type="cofactor">
    <cofactor evidence="1">
        <name>Mg(2+)</name>
        <dbReference type="ChEBI" id="CHEBI:18420"/>
    </cofactor>
    <text evidence="1">Binds 2 Mg(2+) ion per subunit.</text>
</comment>
<comment type="subunit">
    <text evidence="1">Homodimer which binds Holliday junction (HJ) DNA. The HJ becomes 2-fold symmetrical on binding to RuvC with unstacked arms; it has a different conformation from HJ DNA in complex with RuvA. In the full resolvosome a probable DNA-RuvA(4)-RuvB(12)-RuvC(2) complex forms which resolves the HJ.</text>
</comment>
<comment type="subcellular location">
    <subcellularLocation>
        <location evidence="1">Cytoplasm</location>
    </subcellularLocation>
</comment>
<comment type="similarity">
    <text evidence="1 2">Belongs to the RuvC family.</text>
</comment>
<name>RUVC_TREPA</name>
<accession>O83530</accession>
<feature type="chain" id="PRO_0000183141" description="Crossover junction endodeoxyribonuclease RuvC">
    <location>
        <begin position="1"/>
        <end position="196"/>
    </location>
</feature>
<feature type="active site" evidence="1">
    <location>
        <position position="23"/>
    </location>
</feature>
<feature type="active site" evidence="1">
    <location>
        <position position="83"/>
    </location>
</feature>
<feature type="active site" evidence="1">
    <location>
        <position position="156"/>
    </location>
</feature>
<feature type="binding site" evidence="1">
    <location>
        <position position="23"/>
    </location>
    <ligand>
        <name>Mg(2+)</name>
        <dbReference type="ChEBI" id="CHEBI:18420"/>
        <label>1</label>
    </ligand>
</feature>
<feature type="binding site" evidence="1">
    <location>
        <position position="83"/>
    </location>
    <ligand>
        <name>Mg(2+)</name>
        <dbReference type="ChEBI" id="CHEBI:18420"/>
        <label>2</label>
    </ligand>
</feature>
<feature type="binding site" evidence="1">
    <location>
        <position position="156"/>
    </location>
    <ligand>
        <name>Mg(2+)</name>
        <dbReference type="ChEBI" id="CHEBI:18420"/>
        <label>1</label>
    </ligand>
</feature>
<gene>
    <name evidence="1" type="primary">ruvC</name>
    <name type="ordered locus">TP_0517</name>
</gene>
<evidence type="ECO:0000255" key="1">
    <source>
        <dbReference type="HAMAP-Rule" id="MF_00034"/>
    </source>
</evidence>
<evidence type="ECO:0000305" key="2"/>
<keyword id="KW-0963">Cytoplasm</keyword>
<keyword id="KW-0227">DNA damage</keyword>
<keyword id="KW-0233">DNA recombination</keyword>
<keyword id="KW-0234">DNA repair</keyword>
<keyword id="KW-0238">DNA-binding</keyword>
<keyword id="KW-0255">Endonuclease</keyword>
<keyword id="KW-0378">Hydrolase</keyword>
<keyword id="KW-0460">Magnesium</keyword>
<keyword id="KW-0479">Metal-binding</keyword>
<keyword id="KW-0540">Nuclease</keyword>
<keyword id="KW-1185">Reference proteome</keyword>